<feature type="chain" id="PRO_1000119740" description="Chaperone protein DnaK">
    <location>
        <begin position="1"/>
        <end position="640"/>
    </location>
</feature>
<feature type="region of interest" description="Disordered" evidence="2">
    <location>
        <begin position="510"/>
        <end position="530"/>
    </location>
</feature>
<feature type="region of interest" description="Disordered" evidence="2">
    <location>
        <begin position="598"/>
        <end position="640"/>
    </location>
</feature>
<feature type="modified residue" description="Phosphothreonine; by autocatalysis" evidence="1">
    <location>
        <position position="196"/>
    </location>
</feature>
<name>DNAK_PROA2</name>
<organism>
    <name type="scientific">Prosthecochloris aestuarii (strain DSM 271 / SK 413)</name>
    <dbReference type="NCBI Taxonomy" id="290512"/>
    <lineage>
        <taxon>Bacteria</taxon>
        <taxon>Pseudomonadati</taxon>
        <taxon>Chlorobiota</taxon>
        <taxon>Chlorobiia</taxon>
        <taxon>Chlorobiales</taxon>
        <taxon>Chlorobiaceae</taxon>
        <taxon>Prosthecochloris</taxon>
    </lineage>
</organism>
<reference key="1">
    <citation type="submission" date="2008-06" db="EMBL/GenBank/DDBJ databases">
        <title>Complete sequence of chromosome of Prosthecochloris aestuarii DSM 271.</title>
        <authorList>
            <consortium name="US DOE Joint Genome Institute"/>
            <person name="Lucas S."/>
            <person name="Copeland A."/>
            <person name="Lapidus A."/>
            <person name="Glavina del Rio T."/>
            <person name="Dalin E."/>
            <person name="Tice H."/>
            <person name="Bruce D."/>
            <person name="Goodwin L."/>
            <person name="Pitluck S."/>
            <person name="Schmutz J."/>
            <person name="Larimer F."/>
            <person name="Land M."/>
            <person name="Hauser L."/>
            <person name="Kyrpides N."/>
            <person name="Anderson I."/>
            <person name="Liu Z."/>
            <person name="Li T."/>
            <person name="Zhao F."/>
            <person name="Overmann J."/>
            <person name="Bryant D.A."/>
            <person name="Richardson P."/>
        </authorList>
    </citation>
    <scope>NUCLEOTIDE SEQUENCE [LARGE SCALE GENOMIC DNA]</scope>
    <source>
        <strain>DSM 271 / SK 413</strain>
    </source>
</reference>
<protein>
    <recommendedName>
        <fullName evidence="1">Chaperone protein DnaK</fullName>
    </recommendedName>
    <alternativeName>
        <fullName evidence="1">HSP70</fullName>
    </alternativeName>
    <alternativeName>
        <fullName evidence="1">Heat shock 70 kDa protein</fullName>
    </alternativeName>
    <alternativeName>
        <fullName evidence="1">Heat shock protein 70</fullName>
    </alternativeName>
</protein>
<evidence type="ECO:0000255" key="1">
    <source>
        <dbReference type="HAMAP-Rule" id="MF_00332"/>
    </source>
</evidence>
<evidence type="ECO:0000256" key="2">
    <source>
        <dbReference type="SAM" id="MobiDB-lite"/>
    </source>
</evidence>
<accession>B4S6P7</accession>
<sequence>MGKIIGIDLGTTNSCVAVMQGTQPTVIENSEGYRTTPSMVAFTKNGERLIGHAAKRQAITNAKNTVFSIKRFMGRKFDEVPNEKKIAPYKVVNINGEARVEIDDKNYSPQEISAMILQKMKQTAEDFLGEKVTEAVITVPAYFNDAQRQATKDAGKIAGLEVKRIINEPTAAALAYGLDKKKENEKVAVFDLGGGTFDISILELGDGVFEVKSTDGDTHLGGDDFDQTIIDFLADEFKKQEGIDLRTDAIALQRLKEAAEKAKIELSSRTDTEINLPFITATQEGPKHLVVNLTRAKFEALASTLFDNIMAPCKRAIKNAKVNISEIDEVVLVGGSTRIPKVQELVKELFKREPNKSVNPDEVVAVGAAIQGGVLTGEVSDVLLLDVTPLSLGIETLGGVMTKLIEANTTIPTKKQEVFSTAADNQTSVEVHVLQGERPMASDNKTLGRFHLGDIPPAPRGMPQVEVAFDIDANGILHVSAKDKATGKEQSIRIEAGGKLNDAEIEKMKNDAKAHAEEDAKRKEEVETKNAADSLIFSTEKQLQELGDKIPADKKAPLESALDRLKEAHKSGSADAIKPAMDEVNTIWNDIASQLYQAADAPGSGTPNPEAESGKQESSGKTDGQVDAEYEVIDGNDKDK</sequence>
<dbReference type="EMBL" id="CP001108">
    <property type="protein sequence ID" value="ACF45802.1"/>
    <property type="molecule type" value="Genomic_DNA"/>
</dbReference>
<dbReference type="RefSeq" id="WP_012505339.1">
    <property type="nucleotide sequence ID" value="NC_011059.1"/>
</dbReference>
<dbReference type="SMR" id="B4S6P7"/>
<dbReference type="STRING" id="290512.Paes_0755"/>
<dbReference type="KEGG" id="paa:Paes_0755"/>
<dbReference type="eggNOG" id="COG0443">
    <property type="taxonomic scope" value="Bacteria"/>
</dbReference>
<dbReference type="HOGENOM" id="CLU_005965_2_1_10"/>
<dbReference type="Proteomes" id="UP000002725">
    <property type="component" value="Chromosome"/>
</dbReference>
<dbReference type="GO" id="GO:0005524">
    <property type="term" value="F:ATP binding"/>
    <property type="evidence" value="ECO:0007669"/>
    <property type="project" value="UniProtKB-UniRule"/>
</dbReference>
<dbReference type="GO" id="GO:0140662">
    <property type="term" value="F:ATP-dependent protein folding chaperone"/>
    <property type="evidence" value="ECO:0007669"/>
    <property type="project" value="InterPro"/>
</dbReference>
<dbReference type="GO" id="GO:0051082">
    <property type="term" value="F:unfolded protein binding"/>
    <property type="evidence" value="ECO:0007669"/>
    <property type="project" value="InterPro"/>
</dbReference>
<dbReference type="CDD" id="cd10234">
    <property type="entry name" value="ASKHA_NBD_HSP70_DnaK-like"/>
    <property type="match status" value="1"/>
</dbReference>
<dbReference type="FunFam" id="2.60.34.10:FF:000014">
    <property type="entry name" value="Chaperone protein DnaK HSP70"/>
    <property type="match status" value="1"/>
</dbReference>
<dbReference type="FunFam" id="3.30.30.30:FF:000005">
    <property type="entry name" value="Heat shock protein ssb1"/>
    <property type="match status" value="1"/>
</dbReference>
<dbReference type="FunFam" id="1.20.1270.10:FF:000001">
    <property type="entry name" value="Molecular chaperone DnaK"/>
    <property type="match status" value="1"/>
</dbReference>
<dbReference type="FunFam" id="3.30.420.40:FF:000004">
    <property type="entry name" value="Molecular chaperone DnaK"/>
    <property type="match status" value="1"/>
</dbReference>
<dbReference type="FunFam" id="3.90.640.10:FF:000003">
    <property type="entry name" value="Molecular chaperone DnaK"/>
    <property type="match status" value="1"/>
</dbReference>
<dbReference type="Gene3D" id="1.20.1270.10">
    <property type="match status" value="1"/>
</dbReference>
<dbReference type="Gene3D" id="3.30.420.40">
    <property type="match status" value="2"/>
</dbReference>
<dbReference type="Gene3D" id="3.90.640.10">
    <property type="entry name" value="Actin, Chain A, domain 4"/>
    <property type="match status" value="1"/>
</dbReference>
<dbReference type="Gene3D" id="2.60.34.10">
    <property type="entry name" value="Substrate Binding Domain Of DNAk, Chain A, domain 1"/>
    <property type="match status" value="1"/>
</dbReference>
<dbReference type="HAMAP" id="MF_00332">
    <property type="entry name" value="DnaK"/>
    <property type="match status" value="1"/>
</dbReference>
<dbReference type="InterPro" id="IPR043129">
    <property type="entry name" value="ATPase_NBD"/>
</dbReference>
<dbReference type="InterPro" id="IPR012725">
    <property type="entry name" value="Chaperone_DnaK"/>
</dbReference>
<dbReference type="InterPro" id="IPR018181">
    <property type="entry name" value="Heat_shock_70_CS"/>
</dbReference>
<dbReference type="InterPro" id="IPR029048">
    <property type="entry name" value="HSP70_C_sf"/>
</dbReference>
<dbReference type="InterPro" id="IPR029047">
    <property type="entry name" value="HSP70_peptide-bd_sf"/>
</dbReference>
<dbReference type="InterPro" id="IPR013126">
    <property type="entry name" value="Hsp_70_fam"/>
</dbReference>
<dbReference type="NCBIfam" id="NF001413">
    <property type="entry name" value="PRK00290.1"/>
    <property type="match status" value="1"/>
</dbReference>
<dbReference type="NCBIfam" id="NF003520">
    <property type="entry name" value="PRK05183.1"/>
    <property type="match status" value="1"/>
</dbReference>
<dbReference type="NCBIfam" id="TIGR02350">
    <property type="entry name" value="prok_dnaK"/>
    <property type="match status" value="1"/>
</dbReference>
<dbReference type="PANTHER" id="PTHR19375">
    <property type="entry name" value="HEAT SHOCK PROTEIN 70KDA"/>
    <property type="match status" value="1"/>
</dbReference>
<dbReference type="Pfam" id="PF00012">
    <property type="entry name" value="HSP70"/>
    <property type="match status" value="1"/>
</dbReference>
<dbReference type="PRINTS" id="PR00301">
    <property type="entry name" value="HEATSHOCK70"/>
</dbReference>
<dbReference type="SUPFAM" id="SSF53067">
    <property type="entry name" value="Actin-like ATPase domain"/>
    <property type="match status" value="2"/>
</dbReference>
<dbReference type="SUPFAM" id="SSF100934">
    <property type="entry name" value="Heat shock protein 70kD (HSP70), C-terminal subdomain"/>
    <property type="match status" value="1"/>
</dbReference>
<dbReference type="SUPFAM" id="SSF100920">
    <property type="entry name" value="Heat shock protein 70kD (HSP70), peptide-binding domain"/>
    <property type="match status" value="1"/>
</dbReference>
<dbReference type="PROSITE" id="PS00297">
    <property type="entry name" value="HSP70_1"/>
    <property type="match status" value="1"/>
</dbReference>
<dbReference type="PROSITE" id="PS00329">
    <property type="entry name" value="HSP70_2"/>
    <property type="match status" value="1"/>
</dbReference>
<dbReference type="PROSITE" id="PS01036">
    <property type="entry name" value="HSP70_3"/>
    <property type="match status" value="1"/>
</dbReference>
<comment type="function">
    <text evidence="1">Acts as a chaperone.</text>
</comment>
<comment type="induction">
    <text evidence="1">By stress conditions e.g. heat shock.</text>
</comment>
<comment type="similarity">
    <text evidence="1">Belongs to the heat shock protein 70 family.</text>
</comment>
<proteinExistence type="inferred from homology"/>
<gene>
    <name evidence="1" type="primary">dnaK</name>
    <name type="ordered locus">Paes_0755</name>
</gene>
<keyword id="KW-0067">ATP-binding</keyword>
<keyword id="KW-0143">Chaperone</keyword>
<keyword id="KW-0547">Nucleotide-binding</keyword>
<keyword id="KW-0597">Phosphoprotein</keyword>
<keyword id="KW-0346">Stress response</keyword>